<feature type="chain" id="PRO_0000335600" description="Acetylglutamate kinase">
    <location>
        <begin position="1"/>
        <end position="284"/>
    </location>
</feature>
<feature type="binding site" evidence="1">
    <location>
        <begin position="64"/>
        <end position="65"/>
    </location>
    <ligand>
        <name>substrate</name>
    </ligand>
</feature>
<feature type="binding site" evidence="1">
    <location>
        <position position="86"/>
    </location>
    <ligand>
        <name>substrate</name>
    </ligand>
</feature>
<feature type="binding site" evidence="1">
    <location>
        <position position="179"/>
    </location>
    <ligand>
        <name>substrate</name>
    </ligand>
</feature>
<feature type="site" description="Transition state stabilizer" evidence="1">
    <location>
        <position position="29"/>
    </location>
</feature>
<feature type="site" description="Transition state stabilizer" evidence="1">
    <location>
        <position position="242"/>
    </location>
</feature>
<accession>B0CAM3</accession>
<dbReference type="EC" id="2.7.2.8" evidence="1"/>
<dbReference type="EMBL" id="CP000828">
    <property type="protein sequence ID" value="ABW29089.1"/>
    <property type="molecule type" value="Genomic_DNA"/>
</dbReference>
<dbReference type="RefSeq" id="WP_012164434.1">
    <property type="nucleotide sequence ID" value="NC_009925.1"/>
</dbReference>
<dbReference type="SMR" id="B0CAM3"/>
<dbReference type="STRING" id="329726.AM1_4108"/>
<dbReference type="KEGG" id="amr:AM1_4108"/>
<dbReference type="eggNOG" id="COG0548">
    <property type="taxonomic scope" value="Bacteria"/>
</dbReference>
<dbReference type="HOGENOM" id="CLU_053680_0_1_3"/>
<dbReference type="OrthoDB" id="9803155at2"/>
<dbReference type="UniPathway" id="UPA00068">
    <property type="reaction ID" value="UER00107"/>
</dbReference>
<dbReference type="Proteomes" id="UP000000268">
    <property type="component" value="Chromosome"/>
</dbReference>
<dbReference type="GO" id="GO:0005737">
    <property type="term" value="C:cytoplasm"/>
    <property type="evidence" value="ECO:0007669"/>
    <property type="project" value="UniProtKB-SubCell"/>
</dbReference>
<dbReference type="GO" id="GO:0003991">
    <property type="term" value="F:acetylglutamate kinase activity"/>
    <property type="evidence" value="ECO:0007669"/>
    <property type="project" value="UniProtKB-UniRule"/>
</dbReference>
<dbReference type="GO" id="GO:0005524">
    <property type="term" value="F:ATP binding"/>
    <property type="evidence" value="ECO:0007669"/>
    <property type="project" value="UniProtKB-UniRule"/>
</dbReference>
<dbReference type="GO" id="GO:0042450">
    <property type="term" value="P:arginine biosynthetic process via ornithine"/>
    <property type="evidence" value="ECO:0007669"/>
    <property type="project" value="UniProtKB-UniRule"/>
</dbReference>
<dbReference type="GO" id="GO:0006526">
    <property type="term" value="P:L-arginine biosynthetic process"/>
    <property type="evidence" value="ECO:0007669"/>
    <property type="project" value="UniProtKB-UniPathway"/>
</dbReference>
<dbReference type="CDD" id="cd04250">
    <property type="entry name" value="AAK_NAGK-C"/>
    <property type="match status" value="1"/>
</dbReference>
<dbReference type="FunFam" id="3.40.1160.10:FF:000004">
    <property type="entry name" value="Acetylglutamate kinase"/>
    <property type="match status" value="1"/>
</dbReference>
<dbReference type="Gene3D" id="3.40.1160.10">
    <property type="entry name" value="Acetylglutamate kinase-like"/>
    <property type="match status" value="1"/>
</dbReference>
<dbReference type="HAMAP" id="MF_00082">
    <property type="entry name" value="ArgB"/>
    <property type="match status" value="1"/>
</dbReference>
<dbReference type="InterPro" id="IPR036393">
    <property type="entry name" value="AceGlu_kinase-like_sf"/>
</dbReference>
<dbReference type="InterPro" id="IPR004662">
    <property type="entry name" value="AcgluKinase_fam"/>
</dbReference>
<dbReference type="InterPro" id="IPR037528">
    <property type="entry name" value="ArgB"/>
</dbReference>
<dbReference type="InterPro" id="IPR001048">
    <property type="entry name" value="Asp/Glu/Uridylate_kinase"/>
</dbReference>
<dbReference type="InterPro" id="IPR001057">
    <property type="entry name" value="Glu/AcGlu_kinase"/>
</dbReference>
<dbReference type="InterPro" id="IPR041727">
    <property type="entry name" value="NAGK-C"/>
</dbReference>
<dbReference type="NCBIfam" id="TIGR00761">
    <property type="entry name" value="argB"/>
    <property type="match status" value="1"/>
</dbReference>
<dbReference type="PANTHER" id="PTHR23342">
    <property type="entry name" value="N-ACETYLGLUTAMATE SYNTHASE"/>
    <property type="match status" value="1"/>
</dbReference>
<dbReference type="PANTHER" id="PTHR23342:SF0">
    <property type="entry name" value="N-ACETYLGLUTAMATE SYNTHASE, MITOCHONDRIAL"/>
    <property type="match status" value="1"/>
</dbReference>
<dbReference type="Pfam" id="PF00696">
    <property type="entry name" value="AA_kinase"/>
    <property type="match status" value="1"/>
</dbReference>
<dbReference type="PIRSF" id="PIRSF000728">
    <property type="entry name" value="NAGK"/>
    <property type="match status" value="1"/>
</dbReference>
<dbReference type="PRINTS" id="PR00474">
    <property type="entry name" value="GLU5KINASE"/>
</dbReference>
<dbReference type="SUPFAM" id="SSF53633">
    <property type="entry name" value="Carbamate kinase-like"/>
    <property type="match status" value="1"/>
</dbReference>
<proteinExistence type="inferred from homology"/>
<reference key="1">
    <citation type="journal article" date="2008" name="Proc. Natl. Acad. Sci. U.S.A.">
        <title>Niche adaptation and genome expansion in the chlorophyll d-producing cyanobacterium Acaryochloris marina.</title>
        <authorList>
            <person name="Swingley W.D."/>
            <person name="Chen M."/>
            <person name="Cheung P.C."/>
            <person name="Conrad A.L."/>
            <person name="Dejesa L.C."/>
            <person name="Hao J."/>
            <person name="Honchak B.M."/>
            <person name="Karbach L.E."/>
            <person name="Kurdoglu A."/>
            <person name="Lahiri S."/>
            <person name="Mastrian S.D."/>
            <person name="Miyashita H."/>
            <person name="Page L."/>
            <person name="Ramakrishna P."/>
            <person name="Satoh S."/>
            <person name="Sattley W.M."/>
            <person name="Shimada Y."/>
            <person name="Taylor H.L."/>
            <person name="Tomo T."/>
            <person name="Tsuchiya T."/>
            <person name="Wang Z.T."/>
            <person name="Raymond J."/>
            <person name="Mimuro M."/>
            <person name="Blankenship R.E."/>
            <person name="Touchman J.W."/>
        </authorList>
    </citation>
    <scope>NUCLEOTIDE SEQUENCE [LARGE SCALE GENOMIC DNA]</scope>
    <source>
        <strain>MBIC 11017</strain>
    </source>
</reference>
<keyword id="KW-0028">Amino-acid biosynthesis</keyword>
<keyword id="KW-0055">Arginine biosynthesis</keyword>
<keyword id="KW-0067">ATP-binding</keyword>
<keyword id="KW-0963">Cytoplasm</keyword>
<keyword id="KW-0418">Kinase</keyword>
<keyword id="KW-0547">Nucleotide-binding</keyword>
<keyword id="KW-1185">Reference proteome</keyword>
<keyword id="KW-0808">Transferase</keyword>
<name>ARGB_ACAM1</name>
<organism>
    <name type="scientific">Acaryochloris marina (strain MBIC 11017)</name>
    <dbReference type="NCBI Taxonomy" id="329726"/>
    <lineage>
        <taxon>Bacteria</taxon>
        <taxon>Bacillati</taxon>
        <taxon>Cyanobacteriota</taxon>
        <taxon>Cyanophyceae</taxon>
        <taxon>Acaryochloridales</taxon>
        <taxon>Acaryochloridaceae</taxon>
        <taxon>Acaryochloris</taxon>
    </lineage>
</organism>
<evidence type="ECO:0000255" key="1">
    <source>
        <dbReference type="HAMAP-Rule" id="MF_00082"/>
    </source>
</evidence>
<sequence length="284" mass="29914">MFNASDRVQVLSEALPYIQSFAGRTVVVKYGGAAMKDSTLKATVIRDVVFMACVGLRPVLVHGGGPEINLWLEKLGIEPQFMKGLRVTDAPTMDVVEMVLVGRVNKELVSLINQAGGSAVGVCGKDGKLLTARPQGESGIGFVGEVASVNPQLIHNLLDGGHIPIVSSVATDEEGQVYNINADTVAGELAAALDAEKLILLTDTPGILQDYKDATSLIHKLDIRQARELIAAEVVAGGMIPKVTCCIRSLAQGIQAAHIIDGRAPHALLLEIFTDSGIGTMITA</sequence>
<gene>
    <name evidence="1" type="primary">argB</name>
    <name type="ordered locus">AM1_4108</name>
</gene>
<comment type="function">
    <text evidence="1">Catalyzes the ATP-dependent phosphorylation of N-acetyl-L-glutamate.</text>
</comment>
<comment type="catalytic activity">
    <reaction evidence="1">
        <text>N-acetyl-L-glutamate + ATP = N-acetyl-L-glutamyl 5-phosphate + ADP</text>
        <dbReference type="Rhea" id="RHEA:14629"/>
        <dbReference type="ChEBI" id="CHEBI:30616"/>
        <dbReference type="ChEBI" id="CHEBI:44337"/>
        <dbReference type="ChEBI" id="CHEBI:57936"/>
        <dbReference type="ChEBI" id="CHEBI:456216"/>
        <dbReference type="EC" id="2.7.2.8"/>
    </reaction>
</comment>
<comment type="pathway">
    <text evidence="1">Amino-acid biosynthesis; L-arginine biosynthesis; N(2)-acetyl-L-ornithine from L-glutamate: step 2/4.</text>
</comment>
<comment type="subcellular location">
    <subcellularLocation>
        <location evidence="1">Cytoplasm</location>
    </subcellularLocation>
</comment>
<comment type="similarity">
    <text evidence="1">Belongs to the acetylglutamate kinase family. ArgB subfamily.</text>
</comment>
<protein>
    <recommendedName>
        <fullName evidence="1">Acetylglutamate kinase</fullName>
        <ecNumber evidence="1">2.7.2.8</ecNumber>
    </recommendedName>
    <alternativeName>
        <fullName evidence="1">N-acetyl-L-glutamate 5-phosphotransferase</fullName>
    </alternativeName>
    <alternativeName>
        <fullName evidence="1">NAG kinase</fullName>
        <shortName evidence="1">NAGK</shortName>
    </alternativeName>
</protein>